<gene>
    <name type="primary">CAB22R</name>
</gene>
<accession>P04781</accession>
<protein>
    <recommendedName>
        <fullName>Chlorophyll a-b binding protein 22R, chloroplastic</fullName>
    </recommendedName>
    <alternativeName>
        <fullName>LHCII type I CAB-22R</fullName>
        <shortName>LHCP</shortName>
    </alternativeName>
</protein>
<evidence type="ECO:0000250" key="1"/>
<evidence type="ECO:0000250" key="2">
    <source>
        <dbReference type="UniProtKB" id="P07371"/>
    </source>
</evidence>
<evidence type="ECO:0000250" key="3">
    <source>
        <dbReference type="UniProtKB" id="P12333"/>
    </source>
</evidence>
<evidence type="ECO:0000255" key="4"/>
<evidence type="ECO:0000256" key="5">
    <source>
        <dbReference type="SAM" id="MobiDB-lite"/>
    </source>
</evidence>
<evidence type="ECO:0000305" key="6"/>
<name>CB23_PETSP</name>
<dbReference type="EMBL" id="X02360">
    <property type="protein sequence ID" value="CAA26213.1"/>
    <property type="molecule type" value="Genomic_DNA"/>
</dbReference>
<dbReference type="PIR" id="E22936">
    <property type="entry name" value="CDPJ2R"/>
</dbReference>
<dbReference type="SMR" id="P04781"/>
<dbReference type="GO" id="GO:0009535">
    <property type="term" value="C:chloroplast thylakoid membrane"/>
    <property type="evidence" value="ECO:0007669"/>
    <property type="project" value="UniProtKB-SubCell"/>
</dbReference>
<dbReference type="GO" id="GO:0009522">
    <property type="term" value="C:photosystem I"/>
    <property type="evidence" value="ECO:0007669"/>
    <property type="project" value="UniProtKB-KW"/>
</dbReference>
<dbReference type="GO" id="GO:0009523">
    <property type="term" value="C:photosystem II"/>
    <property type="evidence" value="ECO:0007669"/>
    <property type="project" value="UniProtKB-KW"/>
</dbReference>
<dbReference type="GO" id="GO:0016168">
    <property type="term" value="F:chlorophyll binding"/>
    <property type="evidence" value="ECO:0007669"/>
    <property type="project" value="UniProtKB-KW"/>
</dbReference>
<dbReference type="GO" id="GO:0046872">
    <property type="term" value="F:metal ion binding"/>
    <property type="evidence" value="ECO:0007669"/>
    <property type="project" value="UniProtKB-KW"/>
</dbReference>
<dbReference type="GO" id="GO:0009765">
    <property type="term" value="P:photosynthesis, light harvesting"/>
    <property type="evidence" value="ECO:0007669"/>
    <property type="project" value="InterPro"/>
</dbReference>
<dbReference type="FunFam" id="1.10.3460.10:FF:000001">
    <property type="entry name" value="Chlorophyll a-b binding protein, chloroplastic"/>
    <property type="match status" value="1"/>
</dbReference>
<dbReference type="Gene3D" id="1.10.3460.10">
    <property type="entry name" value="Chlorophyll a/b binding protein domain"/>
    <property type="match status" value="1"/>
</dbReference>
<dbReference type="InterPro" id="IPR001344">
    <property type="entry name" value="Chloro_AB-bd_pln"/>
</dbReference>
<dbReference type="InterPro" id="IPR022796">
    <property type="entry name" value="Chloroa_b-bind"/>
</dbReference>
<dbReference type="PANTHER" id="PTHR21649">
    <property type="entry name" value="CHLOROPHYLL A/B BINDING PROTEIN"/>
    <property type="match status" value="1"/>
</dbReference>
<dbReference type="Pfam" id="PF00504">
    <property type="entry name" value="Chloroa_b-bind"/>
    <property type="match status" value="1"/>
</dbReference>
<dbReference type="SUPFAM" id="SSF103511">
    <property type="entry name" value="Chlorophyll a-b binding protein"/>
    <property type="match status" value="1"/>
</dbReference>
<sequence>MAATTMALSSSSFAGKAVKLSSSSSEITGNGKVTMRKTVTKAKPASSSSPWYGPDRVKYLGPFSGEAPSYLTGEFPSDYGWDTAGLSADPETFAKNRELEVIHCRWAMLGALGCVFPELFARNGIKFGEAVWFKAGAQIFSEGGLDYLGNPSLVHAQSILAIWACQVVLMGAVEGYRVAGGPLGEVIDPLYPGGSFDPLGLAEDPEAFAELKVKEIKNGRLAMFSMFGFFVQAIVTGKGPLENLADHLADPVNNNAWSYATNFVPGK</sequence>
<comment type="function">
    <text>The light-harvesting complex (LHC) functions as a light receptor, it captures and delivers excitation energy to photosystems with which it is closely associated.</text>
</comment>
<comment type="cofactor">
    <text evidence="1">Binds at least 14 chlorophylls (8 Chl-a and 6 Chl-b) and carotenoids such as lutein and neoxanthin.</text>
</comment>
<comment type="subunit">
    <text>The LHC complex consists of chlorophyll a-b binding proteins.</text>
</comment>
<comment type="subcellular location">
    <subcellularLocation>
        <location>Plastid</location>
        <location>Chloroplast thylakoid membrane</location>
        <topology>Multi-pass membrane protein</topology>
    </subcellularLocation>
</comment>
<comment type="domain">
    <text>The N-terminus of the protein extends into the stroma where it is involved with adhesion of granal membranes and post-translational modifications; both are believed to mediate the distribution of excitation energy between photosystems I and II.</text>
</comment>
<comment type="PTM">
    <text evidence="1">Photoregulated by reversible phosphorylation of its threonine residues.</text>
</comment>
<comment type="miscellaneous">
    <text>There are at least 16 genes for the major CAB protein which can be classified into at least 5 small multigene families.</text>
</comment>
<comment type="similarity">
    <text evidence="6">Belongs to the light-harvesting chlorophyll a/b-binding (LHC) protein family.</text>
</comment>
<feature type="transit peptide" description="Chloroplast" evidence="6">
    <location>
        <begin position="1"/>
        <end position="35"/>
    </location>
</feature>
<feature type="chain" id="PRO_0000003685" description="Chlorophyll a-b binding protein 22R, chloroplastic">
    <location>
        <begin position="36"/>
        <end position="267"/>
    </location>
</feature>
<feature type="transmembrane region" description="Helical" evidence="4">
    <location>
        <begin position="101"/>
        <end position="121"/>
    </location>
</feature>
<feature type="transmembrane region" description="Helical" evidence="4">
    <location>
        <begin position="153"/>
        <end position="173"/>
    </location>
</feature>
<feature type="transmembrane region" description="Helical" evidence="4">
    <location>
        <begin position="221"/>
        <end position="241"/>
    </location>
</feature>
<feature type="region of interest" description="Disordered" evidence="5">
    <location>
        <begin position="21"/>
        <end position="47"/>
    </location>
</feature>
<feature type="binding site" description="axial binding residue" evidence="3">
    <location>
        <position position="59"/>
    </location>
    <ligand>
        <name>chlorophyll b</name>
        <dbReference type="ChEBI" id="CHEBI:61721"/>
        <label>1</label>
    </ligand>
    <ligandPart>
        <name>Mg</name>
        <dbReference type="ChEBI" id="CHEBI:25107"/>
    </ligandPart>
</feature>
<feature type="binding site" evidence="1">
    <location>
        <position position="81"/>
    </location>
    <ligand>
        <name>chlorophyll a</name>
        <dbReference type="ChEBI" id="CHEBI:58416"/>
        <label>1</label>
    </ligand>
</feature>
<feature type="binding site" evidence="1">
    <location>
        <position position="87"/>
    </location>
    <ligand>
        <name>chlorophyll a</name>
        <dbReference type="ChEBI" id="CHEBI:58416"/>
        <label>1</label>
    </ligand>
</feature>
<feature type="binding site" description="axial binding residue" evidence="3">
    <location>
        <position position="100"/>
    </location>
    <ligand>
        <name>chlorophyll a</name>
        <dbReference type="ChEBI" id="CHEBI:58416"/>
        <label>1</label>
    </ligand>
    <ligandPart>
        <name>Mg</name>
        <dbReference type="ChEBI" id="CHEBI:25107"/>
    </ligandPart>
</feature>
<feature type="binding site" description="axial binding residue" evidence="3">
    <location>
        <position position="103"/>
    </location>
    <ligand>
        <name>chlorophyll a</name>
        <dbReference type="ChEBI" id="CHEBI:58416"/>
        <label>2</label>
    </ligand>
    <ligandPart>
        <name>Mg</name>
        <dbReference type="ChEBI" id="CHEBI:25107"/>
    </ligandPart>
</feature>
<feature type="binding site" evidence="1">
    <location>
        <position position="105"/>
    </location>
    <ligand>
        <name>chlorophyll b</name>
        <dbReference type="ChEBI" id="CHEBI:61721"/>
        <label>2</label>
    </ligand>
</feature>
<feature type="binding site" evidence="1">
    <location>
        <position position="138"/>
    </location>
    <ligand>
        <name>chlorophyll a</name>
        <dbReference type="ChEBI" id="CHEBI:58416"/>
        <label>3</label>
    </ligand>
</feature>
<feature type="binding site" evidence="1">
    <location>
        <position position="148"/>
    </location>
    <ligand>
        <name>chlorophyll a</name>
        <dbReference type="ChEBI" id="CHEBI:58416"/>
        <label>3</label>
    </ligand>
</feature>
<feature type="binding site" description="axial binding residue" evidence="3">
    <location>
        <position position="154"/>
    </location>
    <ligand>
        <name>chlorophyll b</name>
        <dbReference type="ChEBI" id="CHEBI:61721"/>
        <label>2</label>
    </ligand>
    <ligandPart>
        <name>Mg</name>
        <dbReference type="ChEBI" id="CHEBI:25107"/>
    </ligandPart>
</feature>
<feature type="binding site" evidence="1">
    <location>
        <position position="158"/>
    </location>
    <ligand>
        <name>chlorophyll b</name>
        <dbReference type="ChEBI" id="CHEBI:61721"/>
        <label>3</label>
    </ligand>
</feature>
<feature type="binding site" evidence="1">
    <location>
        <position position="166"/>
    </location>
    <ligand>
        <name>chlorophyll b</name>
        <dbReference type="ChEBI" id="CHEBI:61721"/>
        <label>4</label>
    </ligand>
</feature>
<feature type="binding site" evidence="2">
    <location>
        <position position="166"/>
    </location>
    <ligand>
        <name>chlorophyll b</name>
        <dbReference type="ChEBI" id="CHEBI:61721"/>
        <label>5</label>
    </ligand>
</feature>
<feature type="binding site" description="axial binding residue" evidence="3">
    <location>
        <position position="174"/>
    </location>
    <ligand>
        <name>chlorophyll b</name>
        <dbReference type="ChEBI" id="CHEBI:61721"/>
        <label>3</label>
    </ligand>
    <ligandPart>
        <name>Mg</name>
        <dbReference type="ChEBI" id="CHEBI:25107"/>
    </ligandPart>
</feature>
<feature type="binding site" evidence="1">
    <location>
        <position position="177"/>
    </location>
    <ligand>
        <name>chlorophyll b</name>
        <dbReference type="ChEBI" id="CHEBI:61721"/>
        <label>4</label>
    </ligand>
</feature>
<feature type="binding site" evidence="1">
    <location>
        <position position="183"/>
    </location>
    <ligand>
        <name>chlorophyll b</name>
        <dbReference type="ChEBI" id="CHEBI:61721"/>
        <label>2</label>
    </ligand>
</feature>
<feature type="binding site" evidence="1">
    <location>
        <position position="214"/>
    </location>
    <ligand>
        <name>chlorophyll a</name>
        <dbReference type="ChEBI" id="CHEBI:58416"/>
        <label>5</label>
    </ligand>
</feature>
<feature type="binding site" description="axial binding residue" evidence="3">
    <location>
        <position position="215"/>
    </location>
    <ligand>
        <name>chlorophyll a</name>
        <dbReference type="ChEBI" id="CHEBI:58416"/>
        <label>3</label>
    </ligand>
    <ligandPart>
        <name>Mg</name>
        <dbReference type="ChEBI" id="CHEBI:25107"/>
    </ligandPart>
</feature>
<feature type="binding site" description="axial binding residue" evidence="3">
    <location>
        <position position="218"/>
    </location>
    <ligand>
        <name>chlorophyll a</name>
        <dbReference type="ChEBI" id="CHEBI:58416"/>
        <label>4</label>
    </ligand>
    <ligandPart>
        <name>Mg</name>
        <dbReference type="ChEBI" id="CHEBI:25107"/>
    </ligandPart>
</feature>
<feature type="binding site" evidence="1">
    <location>
        <position position="220"/>
    </location>
    <ligand>
        <name>chlorophyll a</name>
        <dbReference type="ChEBI" id="CHEBI:58416"/>
        <label>1</label>
    </ligand>
</feature>
<feature type="binding site" description="axial binding residue" evidence="3">
    <location>
        <position position="232"/>
    </location>
    <ligand>
        <name>chlorophyll a</name>
        <dbReference type="ChEBI" id="CHEBI:58416"/>
        <label>5</label>
    </ligand>
    <ligandPart>
        <name>Mg</name>
        <dbReference type="ChEBI" id="CHEBI:25107"/>
    </ligandPart>
</feature>
<feature type="binding site" description="axial binding residue" evidence="3">
    <location>
        <position position="247"/>
    </location>
    <ligand>
        <name>chlorophyll a</name>
        <dbReference type="ChEBI" id="CHEBI:58416"/>
        <label>6</label>
    </ligand>
    <ligandPart>
        <name>Mg</name>
        <dbReference type="ChEBI" id="CHEBI:25107"/>
    </ligandPart>
</feature>
<feature type="binding site" evidence="1">
    <location>
        <position position="256"/>
    </location>
    <ligand>
        <name>chlorophyll a</name>
        <dbReference type="ChEBI" id="CHEBI:58416"/>
        <label>6</label>
    </ligand>
</feature>
<feature type="binding site" evidence="1">
    <location>
        <position position="263"/>
    </location>
    <ligand>
        <name>chlorophyll b</name>
        <dbReference type="ChEBI" id="CHEBI:61721"/>
        <label>5</label>
    </ligand>
</feature>
<feature type="modified residue" description="N2-acetylarginine" evidence="1">
    <location>
        <position position="36"/>
    </location>
</feature>
<feature type="modified residue" description="Phosphothreonine" evidence="1">
    <location>
        <position position="38"/>
    </location>
</feature>
<organism>
    <name type="scientific">Petunia sp.</name>
    <name type="common">Petunia</name>
    <dbReference type="NCBI Taxonomy" id="4104"/>
    <lineage>
        <taxon>Eukaryota</taxon>
        <taxon>Viridiplantae</taxon>
        <taxon>Streptophyta</taxon>
        <taxon>Embryophyta</taxon>
        <taxon>Tracheophyta</taxon>
        <taxon>Spermatophyta</taxon>
        <taxon>Magnoliopsida</taxon>
        <taxon>eudicotyledons</taxon>
        <taxon>Gunneridae</taxon>
        <taxon>Pentapetalae</taxon>
        <taxon>asterids</taxon>
        <taxon>lamiids</taxon>
        <taxon>Solanales</taxon>
        <taxon>Solanaceae</taxon>
        <taxon>Petunioideae</taxon>
        <taxon>Petunia</taxon>
    </lineage>
</organism>
<keyword id="KW-0007">Acetylation</keyword>
<keyword id="KW-0148">Chlorophyll</keyword>
<keyword id="KW-0150">Chloroplast</keyword>
<keyword id="KW-0157">Chromophore</keyword>
<keyword id="KW-0460">Magnesium</keyword>
<keyword id="KW-0472">Membrane</keyword>
<keyword id="KW-0479">Metal-binding</keyword>
<keyword id="KW-0597">Phosphoprotein</keyword>
<keyword id="KW-0602">Photosynthesis</keyword>
<keyword id="KW-0603">Photosystem I</keyword>
<keyword id="KW-0604">Photosystem II</keyword>
<keyword id="KW-0934">Plastid</keyword>
<keyword id="KW-0793">Thylakoid</keyword>
<keyword id="KW-0809">Transit peptide</keyword>
<keyword id="KW-0812">Transmembrane</keyword>
<keyword id="KW-1133">Transmembrane helix</keyword>
<reference key="1">
    <citation type="journal article" date="1985" name="Nucleic Acids Res.">
        <title>The petunia chlorophyll a/b binding protein genes: a comparison of Cab genes from different gene families.</title>
        <authorList>
            <person name="Dunsmuir P."/>
        </authorList>
    </citation>
    <scope>NUCLEOTIDE SEQUENCE [GENOMIC DNA]</scope>
</reference>
<proteinExistence type="inferred from homology"/>